<proteinExistence type="inferred from homology"/>
<evidence type="ECO:0000255" key="1">
    <source>
        <dbReference type="HAMAP-Rule" id="MF_01152"/>
    </source>
</evidence>
<evidence type="ECO:0000305" key="2"/>
<name>DNAJ_THEVB</name>
<gene>
    <name evidence="1" type="primary">dnaJ</name>
    <name type="ordered locus">tll0790</name>
</gene>
<protein>
    <recommendedName>
        <fullName evidence="1">Chaperone protein DnaJ</fullName>
    </recommendedName>
</protein>
<feature type="chain" id="PRO_0000070911" description="Chaperone protein DnaJ">
    <location>
        <begin position="1"/>
        <end position="373"/>
    </location>
</feature>
<feature type="domain" description="J" evidence="1">
    <location>
        <begin position="4"/>
        <end position="68"/>
    </location>
</feature>
<feature type="repeat" description="CXXCXGXG motif">
    <location>
        <begin position="145"/>
        <end position="152"/>
    </location>
</feature>
<feature type="repeat" description="CXXCXGXG motif">
    <location>
        <begin position="162"/>
        <end position="169"/>
    </location>
</feature>
<feature type="repeat" description="CXXCXGXG motif">
    <location>
        <begin position="188"/>
        <end position="195"/>
    </location>
</feature>
<feature type="repeat" description="CXXCXGXG motif">
    <location>
        <begin position="202"/>
        <end position="209"/>
    </location>
</feature>
<feature type="zinc finger region" description="CR-type" evidence="1">
    <location>
        <begin position="132"/>
        <end position="214"/>
    </location>
</feature>
<feature type="binding site" evidence="1">
    <location>
        <position position="145"/>
    </location>
    <ligand>
        <name>Zn(2+)</name>
        <dbReference type="ChEBI" id="CHEBI:29105"/>
        <label>1</label>
    </ligand>
</feature>
<feature type="binding site" evidence="1">
    <location>
        <position position="148"/>
    </location>
    <ligand>
        <name>Zn(2+)</name>
        <dbReference type="ChEBI" id="CHEBI:29105"/>
        <label>1</label>
    </ligand>
</feature>
<feature type="binding site" evidence="1">
    <location>
        <position position="162"/>
    </location>
    <ligand>
        <name>Zn(2+)</name>
        <dbReference type="ChEBI" id="CHEBI:29105"/>
        <label>2</label>
    </ligand>
</feature>
<feature type="binding site" evidence="1">
    <location>
        <position position="165"/>
    </location>
    <ligand>
        <name>Zn(2+)</name>
        <dbReference type="ChEBI" id="CHEBI:29105"/>
        <label>2</label>
    </ligand>
</feature>
<feature type="binding site" evidence="1">
    <location>
        <position position="188"/>
    </location>
    <ligand>
        <name>Zn(2+)</name>
        <dbReference type="ChEBI" id="CHEBI:29105"/>
        <label>2</label>
    </ligand>
</feature>
<feature type="binding site" evidence="1">
    <location>
        <position position="191"/>
    </location>
    <ligand>
        <name>Zn(2+)</name>
        <dbReference type="ChEBI" id="CHEBI:29105"/>
        <label>2</label>
    </ligand>
</feature>
<feature type="binding site" evidence="1">
    <location>
        <position position="202"/>
    </location>
    <ligand>
        <name>Zn(2+)</name>
        <dbReference type="ChEBI" id="CHEBI:29105"/>
        <label>1</label>
    </ligand>
</feature>
<feature type="binding site" evidence="1">
    <location>
        <position position="205"/>
    </location>
    <ligand>
        <name>Zn(2+)</name>
        <dbReference type="ChEBI" id="CHEBI:29105"/>
        <label>1</label>
    </ligand>
</feature>
<reference key="1">
    <citation type="journal article" date="2002" name="DNA Res.">
        <title>Complete genome structure of the thermophilic cyanobacterium Thermosynechococcus elongatus BP-1.</title>
        <authorList>
            <person name="Nakamura Y."/>
            <person name="Kaneko T."/>
            <person name="Sato S."/>
            <person name="Ikeuchi M."/>
            <person name="Katoh H."/>
            <person name="Sasamoto S."/>
            <person name="Watanabe A."/>
            <person name="Iriguchi M."/>
            <person name="Kawashima K."/>
            <person name="Kimura T."/>
            <person name="Kishida Y."/>
            <person name="Kiyokawa C."/>
            <person name="Kohara M."/>
            <person name="Matsumoto M."/>
            <person name="Matsuno A."/>
            <person name="Nakazaki N."/>
            <person name="Shimpo S."/>
            <person name="Sugimoto M."/>
            <person name="Takeuchi C."/>
            <person name="Yamada M."/>
            <person name="Tabata S."/>
        </authorList>
    </citation>
    <scope>NUCLEOTIDE SEQUENCE [LARGE SCALE GENOMIC DNA]</scope>
    <source>
        <strain>NIES-2133 / IAM M-273 / BP-1</strain>
    </source>
</reference>
<comment type="function">
    <text evidence="1">Participates actively in the response to hyperosmotic and heat shock by preventing the aggregation of stress-denatured proteins and by disaggregating proteins, also in an autonomous, DnaK-independent fashion. Unfolded proteins bind initially to DnaJ; upon interaction with the DnaJ-bound protein, DnaK hydrolyzes its bound ATP, resulting in the formation of a stable complex. GrpE releases ADP from DnaK; ATP binding to DnaK triggers the release of the substrate protein, thus completing the reaction cycle. Several rounds of ATP-dependent interactions between DnaJ, DnaK and GrpE are required for fully efficient folding. Also involved, together with DnaK and GrpE, in the DNA replication of plasmids through activation of initiation proteins.</text>
</comment>
<comment type="cofactor">
    <cofactor evidence="1">
        <name>Zn(2+)</name>
        <dbReference type="ChEBI" id="CHEBI:29105"/>
    </cofactor>
    <text evidence="1">Binds 2 Zn(2+) ions per monomer.</text>
</comment>
<comment type="subunit">
    <text evidence="1">Homodimer.</text>
</comment>
<comment type="subcellular location">
    <subcellularLocation>
        <location evidence="1">Cytoplasm</location>
    </subcellularLocation>
</comment>
<comment type="domain">
    <text evidence="1">The J domain is necessary and sufficient to stimulate DnaK ATPase activity. Zinc center 1 plays an important role in the autonomous, DnaK-independent chaperone activity of DnaJ. Zinc center 2 is essential for interaction with DnaK and for DnaJ activity.</text>
</comment>
<comment type="similarity">
    <text evidence="1">Belongs to the DnaJ family.</text>
</comment>
<comment type="sequence caution" evidence="2">
    <conflict type="erroneous initiation">
        <sequence resource="EMBL-CDS" id="BAC08341"/>
    </conflict>
</comment>
<organism>
    <name type="scientific">Thermosynechococcus vestitus (strain NIES-2133 / IAM M-273 / BP-1)</name>
    <dbReference type="NCBI Taxonomy" id="197221"/>
    <lineage>
        <taxon>Bacteria</taxon>
        <taxon>Bacillati</taxon>
        <taxon>Cyanobacteriota</taxon>
        <taxon>Cyanophyceae</taxon>
        <taxon>Acaryochloridales</taxon>
        <taxon>Thermosynechococcaceae</taxon>
        <taxon>Thermosynechococcus</taxon>
    </lineage>
</organism>
<sequence>MARDFYEILGVSRSADAEELKRAYRRLARKYHPDVNKEPGAEEKFKEINRAYEVLSDPQARANYDRFGEAGVSGVGAAGFSDFGIGDMGGFADIFETFFGGFTTSSRRQQGPTRGEDLRYDLKLEFREAVFGGEKEIRINHLETCKTCQGTGAKPGTRPVTCSTCGGVGQVRRSARTPFGSFTQLTTCPTCGGSGVVIEDRCESCGGQGHIQVSKKLKITIPAGVDNGTRLRVSGEGDAGLRGGPPGDLYVYLFVQPDPEFQREGNNILSRIKISYLQAILGCRISVSTVDGEAELKIPAGTQPGTVLVLEGRGVPRVGNPVARGDHLITVDVEIPTHITHEERELLEKLAKIRGERLGKGGLEGFLGSLFGG</sequence>
<accession>Q8DKR7</accession>
<keyword id="KW-0143">Chaperone</keyword>
<keyword id="KW-0963">Cytoplasm</keyword>
<keyword id="KW-0235">DNA replication</keyword>
<keyword id="KW-0479">Metal-binding</keyword>
<keyword id="KW-1185">Reference proteome</keyword>
<keyword id="KW-0677">Repeat</keyword>
<keyword id="KW-0346">Stress response</keyword>
<keyword id="KW-0862">Zinc</keyword>
<keyword id="KW-0863">Zinc-finger</keyword>
<dbReference type="EMBL" id="BA000039">
    <property type="protein sequence ID" value="BAC08341.1"/>
    <property type="status" value="ALT_INIT"/>
    <property type="molecule type" value="Genomic_DNA"/>
</dbReference>
<dbReference type="RefSeq" id="NP_681579.1">
    <property type="nucleotide sequence ID" value="NC_004113.1"/>
</dbReference>
<dbReference type="RefSeq" id="WP_164920758.1">
    <property type="nucleotide sequence ID" value="NC_004113.1"/>
</dbReference>
<dbReference type="SMR" id="Q8DKR7"/>
<dbReference type="STRING" id="197221.gene:10747381"/>
<dbReference type="EnsemblBacteria" id="BAC08341">
    <property type="protein sequence ID" value="BAC08341"/>
    <property type="gene ID" value="BAC08341"/>
</dbReference>
<dbReference type="KEGG" id="tel:tll0790"/>
<dbReference type="PATRIC" id="fig|197221.4.peg.829"/>
<dbReference type="eggNOG" id="COG0484">
    <property type="taxonomic scope" value="Bacteria"/>
</dbReference>
<dbReference type="Proteomes" id="UP000000440">
    <property type="component" value="Chromosome"/>
</dbReference>
<dbReference type="GO" id="GO:0005737">
    <property type="term" value="C:cytoplasm"/>
    <property type="evidence" value="ECO:0007669"/>
    <property type="project" value="UniProtKB-SubCell"/>
</dbReference>
<dbReference type="GO" id="GO:0005524">
    <property type="term" value="F:ATP binding"/>
    <property type="evidence" value="ECO:0007669"/>
    <property type="project" value="InterPro"/>
</dbReference>
<dbReference type="GO" id="GO:0031072">
    <property type="term" value="F:heat shock protein binding"/>
    <property type="evidence" value="ECO:0007669"/>
    <property type="project" value="InterPro"/>
</dbReference>
<dbReference type="GO" id="GO:0051082">
    <property type="term" value="F:unfolded protein binding"/>
    <property type="evidence" value="ECO:0007669"/>
    <property type="project" value="UniProtKB-UniRule"/>
</dbReference>
<dbReference type="GO" id="GO:0008270">
    <property type="term" value="F:zinc ion binding"/>
    <property type="evidence" value="ECO:0007669"/>
    <property type="project" value="UniProtKB-UniRule"/>
</dbReference>
<dbReference type="GO" id="GO:0051085">
    <property type="term" value="P:chaperone cofactor-dependent protein refolding"/>
    <property type="evidence" value="ECO:0007669"/>
    <property type="project" value="TreeGrafter"/>
</dbReference>
<dbReference type="GO" id="GO:0006260">
    <property type="term" value="P:DNA replication"/>
    <property type="evidence" value="ECO:0007669"/>
    <property type="project" value="UniProtKB-KW"/>
</dbReference>
<dbReference type="GO" id="GO:0042026">
    <property type="term" value="P:protein refolding"/>
    <property type="evidence" value="ECO:0007669"/>
    <property type="project" value="TreeGrafter"/>
</dbReference>
<dbReference type="GO" id="GO:0009408">
    <property type="term" value="P:response to heat"/>
    <property type="evidence" value="ECO:0007669"/>
    <property type="project" value="InterPro"/>
</dbReference>
<dbReference type="CDD" id="cd06257">
    <property type="entry name" value="DnaJ"/>
    <property type="match status" value="1"/>
</dbReference>
<dbReference type="CDD" id="cd10747">
    <property type="entry name" value="DnaJ_C"/>
    <property type="match status" value="1"/>
</dbReference>
<dbReference type="CDD" id="cd10719">
    <property type="entry name" value="DnaJ_zf"/>
    <property type="match status" value="1"/>
</dbReference>
<dbReference type="FunFam" id="2.60.260.20:FF:000005">
    <property type="entry name" value="Chaperone protein dnaJ 1, mitochondrial"/>
    <property type="match status" value="1"/>
</dbReference>
<dbReference type="FunFam" id="1.10.287.110:FF:000031">
    <property type="entry name" value="Molecular chaperone DnaJ"/>
    <property type="match status" value="1"/>
</dbReference>
<dbReference type="FunFam" id="2.10.230.10:FF:000002">
    <property type="entry name" value="Molecular chaperone DnaJ"/>
    <property type="match status" value="1"/>
</dbReference>
<dbReference type="FunFam" id="2.60.260.20:FF:000009">
    <property type="entry name" value="Putative Mitochondrial DnaJ chaperone"/>
    <property type="match status" value="1"/>
</dbReference>
<dbReference type="Gene3D" id="1.10.287.110">
    <property type="entry name" value="DnaJ domain"/>
    <property type="match status" value="1"/>
</dbReference>
<dbReference type="Gene3D" id="2.10.230.10">
    <property type="entry name" value="Heat shock protein DnaJ, cysteine-rich domain"/>
    <property type="match status" value="1"/>
</dbReference>
<dbReference type="Gene3D" id="2.60.260.20">
    <property type="entry name" value="Urease metallochaperone UreE, N-terminal domain"/>
    <property type="match status" value="2"/>
</dbReference>
<dbReference type="HAMAP" id="MF_01152">
    <property type="entry name" value="DnaJ"/>
    <property type="match status" value="1"/>
</dbReference>
<dbReference type="InterPro" id="IPR012724">
    <property type="entry name" value="DnaJ"/>
</dbReference>
<dbReference type="InterPro" id="IPR002939">
    <property type="entry name" value="DnaJ_C"/>
</dbReference>
<dbReference type="InterPro" id="IPR001623">
    <property type="entry name" value="DnaJ_domain"/>
</dbReference>
<dbReference type="InterPro" id="IPR018253">
    <property type="entry name" value="DnaJ_domain_CS"/>
</dbReference>
<dbReference type="InterPro" id="IPR008971">
    <property type="entry name" value="HSP40/DnaJ_pept-bd"/>
</dbReference>
<dbReference type="InterPro" id="IPR001305">
    <property type="entry name" value="HSP_DnaJ_Cys-rich_dom"/>
</dbReference>
<dbReference type="InterPro" id="IPR036410">
    <property type="entry name" value="HSP_DnaJ_Cys-rich_dom_sf"/>
</dbReference>
<dbReference type="InterPro" id="IPR036869">
    <property type="entry name" value="J_dom_sf"/>
</dbReference>
<dbReference type="NCBIfam" id="TIGR02349">
    <property type="entry name" value="DnaJ_bact"/>
    <property type="match status" value="1"/>
</dbReference>
<dbReference type="NCBIfam" id="NF008035">
    <property type="entry name" value="PRK10767.1"/>
    <property type="match status" value="1"/>
</dbReference>
<dbReference type="NCBIfam" id="NF010886">
    <property type="entry name" value="PRK14293.1"/>
    <property type="match status" value="1"/>
</dbReference>
<dbReference type="PANTHER" id="PTHR43096:SF10">
    <property type="entry name" value="CHAPERONE PROTEIN DNAJ A6, CHLOROPLASTIC"/>
    <property type="match status" value="1"/>
</dbReference>
<dbReference type="PANTHER" id="PTHR43096">
    <property type="entry name" value="DNAJ HOMOLOG 1, MITOCHONDRIAL-RELATED"/>
    <property type="match status" value="1"/>
</dbReference>
<dbReference type="Pfam" id="PF00226">
    <property type="entry name" value="DnaJ"/>
    <property type="match status" value="1"/>
</dbReference>
<dbReference type="Pfam" id="PF01556">
    <property type="entry name" value="DnaJ_C"/>
    <property type="match status" value="1"/>
</dbReference>
<dbReference type="Pfam" id="PF00684">
    <property type="entry name" value="DnaJ_CXXCXGXG"/>
    <property type="match status" value="1"/>
</dbReference>
<dbReference type="PRINTS" id="PR00625">
    <property type="entry name" value="JDOMAIN"/>
</dbReference>
<dbReference type="SMART" id="SM00271">
    <property type="entry name" value="DnaJ"/>
    <property type="match status" value="1"/>
</dbReference>
<dbReference type="SUPFAM" id="SSF46565">
    <property type="entry name" value="Chaperone J-domain"/>
    <property type="match status" value="1"/>
</dbReference>
<dbReference type="SUPFAM" id="SSF57938">
    <property type="entry name" value="DnaJ/Hsp40 cysteine-rich domain"/>
    <property type="match status" value="1"/>
</dbReference>
<dbReference type="SUPFAM" id="SSF49493">
    <property type="entry name" value="HSP40/DnaJ peptide-binding domain"/>
    <property type="match status" value="2"/>
</dbReference>
<dbReference type="PROSITE" id="PS00636">
    <property type="entry name" value="DNAJ_1"/>
    <property type="match status" value="1"/>
</dbReference>
<dbReference type="PROSITE" id="PS50076">
    <property type="entry name" value="DNAJ_2"/>
    <property type="match status" value="1"/>
</dbReference>
<dbReference type="PROSITE" id="PS51188">
    <property type="entry name" value="ZF_CR"/>
    <property type="match status" value="1"/>
</dbReference>